<dbReference type="EMBL" id="Z28244">
    <property type="protein sequence ID" value="CAA82091.1"/>
    <property type="molecule type" value="Genomic_DNA"/>
</dbReference>
<dbReference type="EMBL" id="BK006944">
    <property type="protein sequence ID" value="DAA09174.1"/>
    <property type="molecule type" value="Genomic_DNA"/>
</dbReference>
<dbReference type="PIR" id="S38088">
    <property type="entry name" value="S38088"/>
</dbReference>
<dbReference type="RefSeq" id="NP_012944.3">
    <property type="nucleotide sequence ID" value="NM_001179809.3"/>
</dbReference>
<dbReference type="SMR" id="P36115"/>
<dbReference type="BioGRID" id="34151">
    <property type="interactions" value="331"/>
</dbReference>
<dbReference type="FunCoup" id="P36115">
    <property type="interactions" value="25"/>
</dbReference>
<dbReference type="IntAct" id="P36115">
    <property type="interactions" value="2"/>
</dbReference>
<dbReference type="STRING" id="4932.YKR019C"/>
<dbReference type="iPTMnet" id="P36115"/>
<dbReference type="PaxDb" id="4932-YKR019C"/>
<dbReference type="PeptideAtlas" id="P36115"/>
<dbReference type="EnsemblFungi" id="YKR019C_mRNA">
    <property type="protein sequence ID" value="YKR019C"/>
    <property type="gene ID" value="YKR019C"/>
</dbReference>
<dbReference type="GeneID" id="853889"/>
<dbReference type="KEGG" id="sce:YKR019C"/>
<dbReference type="AGR" id="SGD:S000001727"/>
<dbReference type="SGD" id="S000001727">
    <property type="gene designation" value="IRS4"/>
</dbReference>
<dbReference type="VEuPathDB" id="FungiDB:YKR019C"/>
<dbReference type="eggNOG" id="KOG0998">
    <property type="taxonomic scope" value="Eukaryota"/>
</dbReference>
<dbReference type="GeneTree" id="ENSGT00940000176414"/>
<dbReference type="HOGENOM" id="CLU_454275_0_0_1"/>
<dbReference type="InParanoid" id="P36115"/>
<dbReference type="OMA" id="CESEPSI"/>
<dbReference type="OrthoDB" id="10045710at2759"/>
<dbReference type="BioCyc" id="YEAST:G3O-31995-MONOMER"/>
<dbReference type="Reactome" id="R-SCE-416482">
    <property type="pathway name" value="G alpha (12/13) signalling events"/>
</dbReference>
<dbReference type="Reactome" id="R-SCE-8856828">
    <property type="pathway name" value="Clathrin-mediated endocytosis"/>
</dbReference>
<dbReference type="Reactome" id="R-SCE-9013148">
    <property type="pathway name" value="CDC42 GTPase cycle"/>
</dbReference>
<dbReference type="Reactome" id="R-SCE-9013406">
    <property type="pathway name" value="RHOQ GTPase cycle"/>
</dbReference>
<dbReference type="Reactome" id="R-SCE-9013420">
    <property type="pathway name" value="RHOU GTPase cycle"/>
</dbReference>
<dbReference type="BioGRID-ORCS" id="853889">
    <property type="hits" value="1 hit in 10 CRISPR screens"/>
</dbReference>
<dbReference type="PRO" id="PR:P36115"/>
<dbReference type="Proteomes" id="UP000002311">
    <property type="component" value="Chromosome XI"/>
</dbReference>
<dbReference type="RNAct" id="P36115">
    <property type="molecule type" value="protein"/>
</dbReference>
<dbReference type="GO" id="GO:0005737">
    <property type="term" value="C:cytoplasm"/>
    <property type="evidence" value="ECO:0000318"/>
    <property type="project" value="GO_Central"/>
</dbReference>
<dbReference type="GO" id="GO:0005739">
    <property type="term" value="C:mitochondrion"/>
    <property type="evidence" value="ECO:0007005"/>
    <property type="project" value="SGD"/>
</dbReference>
<dbReference type="GO" id="GO:0000407">
    <property type="term" value="C:phagophore assembly site"/>
    <property type="evidence" value="ECO:0000314"/>
    <property type="project" value="SGD"/>
</dbReference>
<dbReference type="GO" id="GO:0005886">
    <property type="term" value="C:plasma membrane"/>
    <property type="evidence" value="ECO:0000318"/>
    <property type="project" value="GO_Central"/>
</dbReference>
<dbReference type="GO" id="GO:0006914">
    <property type="term" value="P:autophagy"/>
    <property type="evidence" value="ECO:0000316"/>
    <property type="project" value="SGD"/>
</dbReference>
<dbReference type="GO" id="GO:0006897">
    <property type="term" value="P:endocytosis"/>
    <property type="evidence" value="ECO:0000318"/>
    <property type="project" value="GO_Central"/>
</dbReference>
<dbReference type="GO" id="GO:0016197">
    <property type="term" value="P:endosomal transport"/>
    <property type="evidence" value="ECO:0000318"/>
    <property type="project" value="GO_Central"/>
</dbReference>
<dbReference type="GO" id="GO:0031505">
    <property type="term" value="P:fungal-type cell wall organization"/>
    <property type="evidence" value="ECO:0000316"/>
    <property type="project" value="SGD"/>
</dbReference>
<dbReference type="GO" id="GO:0006629">
    <property type="term" value="P:lipid metabolic process"/>
    <property type="evidence" value="ECO:0007669"/>
    <property type="project" value="UniProtKB-KW"/>
</dbReference>
<dbReference type="GO" id="GO:0000183">
    <property type="term" value="P:rDNA heterochromatin formation"/>
    <property type="evidence" value="ECO:0000315"/>
    <property type="project" value="SGD"/>
</dbReference>
<dbReference type="CDD" id="cd00052">
    <property type="entry name" value="EH"/>
    <property type="match status" value="1"/>
</dbReference>
<dbReference type="FunFam" id="1.10.238.10:FF:000326">
    <property type="entry name" value="IRS4p EH domain-containing protein"/>
    <property type="match status" value="1"/>
</dbReference>
<dbReference type="Gene3D" id="1.10.238.10">
    <property type="entry name" value="EF-hand"/>
    <property type="match status" value="1"/>
</dbReference>
<dbReference type="InterPro" id="IPR011992">
    <property type="entry name" value="EF-hand-dom_pair"/>
</dbReference>
<dbReference type="InterPro" id="IPR000261">
    <property type="entry name" value="EH_dom"/>
</dbReference>
<dbReference type="Pfam" id="PF12763">
    <property type="entry name" value="EH"/>
    <property type="match status" value="1"/>
</dbReference>
<dbReference type="SMART" id="SM00027">
    <property type="entry name" value="EH"/>
    <property type="match status" value="1"/>
</dbReference>
<dbReference type="SUPFAM" id="SSF47473">
    <property type="entry name" value="EF-hand"/>
    <property type="match status" value="1"/>
</dbReference>
<name>IRS4_YEAST</name>
<gene>
    <name type="primary">IRS4</name>
    <name type="ordered locus">YKR019C</name>
</gene>
<evidence type="ECO:0000256" key="1">
    <source>
        <dbReference type="SAM" id="MobiDB-lite"/>
    </source>
</evidence>
<evidence type="ECO:0000269" key="2">
    <source>
    </source>
</evidence>
<evidence type="ECO:0000269" key="3">
    <source>
    </source>
</evidence>
<evidence type="ECO:0000305" key="4"/>
<evidence type="ECO:0007744" key="5">
    <source>
    </source>
</evidence>
<protein>
    <recommendedName>
        <fullName>Increased rDNA silencing protein 4</fullName>
    </recommendedName>
</protein>
<sequence>MRLSFGKQRYHGGTTVTLTEQGASDSLRAAQAIFQNHSNEVSSPCPPVTVSRNPQTRLSEPSLQKSGRKQEQKKARIRTKQVPKIKTTAPNDVELSKKHRSSPAGKDNVSSTAQMAAALAHSQSKLSSDNNSSHSSALDTLKVLETPNLNGLLGIHSRSSSRNGSNESLTPGQRTPDNRSQENLLTSFSSGRRLSSSSMEPATNKDSNKALPKRRPSPPLQSSLVGSGQLHENENLSSISIDSRHSLNPDTSDVISNRSQTSLSQTINQLSLCESEPSIASSNTTTTTSNQGSGLPNLVPNYSSDMRKKKLVNKFKRKVFGSKPKHLSSQYEMDASSEELGQHEQQPSMRFKTTLRKTSVSTNAENDHASSLHEGNLRYKYNPSNDTYDVYDDTDSDSESDQNQDALTKPRKRDRIKRKIRNSANKTAHHRPIHRTRDRKFNEDKPWKSHTDITFVTDNERKRYESMWVSNRHRHLNLLSWWPSITGDSGAINTLPEDGLILGIIVRDIWKRSNLPNSLLAEIYTKVDTRKDGTLDRKSFIVGMWLVDQCLYGRKLPNVVEQCVWDSVDRYASTTVVPVSTLKAMAKQKRKQMKEEIKNIKKENRVVLVDHNSSS</sequence>
<reference key="1">
    <citation type="journal article" date="1994" name="Nature">
        <title>Complete DNA sequence of yeast chromosome XI.</title>
        <authorList>
            <person name="Dujon B."/>
            <person name="Alexandraki D."/>
            <person name="Andre B."/>
            <person name="Ansorge W."/>
            <person name="Baladron V."/>
            <person name="Ballesta J.P.G."/>
            <person name="Banrevi A."/>
            <person name="Bolle P.-A."/>
            <person name="Bolotin-Fukuhara M."/>
            <person name="Bossier P."/>
            <person name="Bou G."/>
            <person name="Boyer J."/>
            <person name="Buitrago M.J."/>
            <person name="Cheret G."/>
            <person name="Colleaux L."/>
            <person name="Daignan-Fornier B."/>
            <person name="del Rey F."/>
            <person name="Dion C."/>
            <person name="Domdey H."/>
            <person name="Duesterhoeft A."/>
            <person name="Duesterhus S."/>
            <person name="Entian K.-D."/>
            <person name="Erfle H."/>
            <person name="Esteban P.F."/>
            <person name="Feldmann H."/>
            <person name="Fernandes L."/>
            <person name="Fobo G.M."/>
            <person name="Fritz C."/>
            <person name="Fukuhara H."/>
            <person name="Gabel C."/>
            <person name="Gaillon L."/>
            <person name="Garcia-Cantalejo J.M."/>
            <person name="Garcia-Ramirez J.J."/>
            <person name="Gent M.E."/>
            <person name="Ghazvini M."/>
            <person name="Goffeau A."/>
            <person name="Gonzalez A."/>
            <person name="Grothues D."/>
            <person name="Guerreiro P."/>
            <person name="Hegemann J.H."/>
            <person name="Hewitt N."/>
            <person name="Hilger F."/>
            <person name="Hollenberg C.P."/>
            <person name="Horaitis O."/>
            <person name="Indge K.J."/>
            <person name="Jacquier A."/>
            <person name="James C.M."/>
            <person name="Jauniaux J.-C."/>
            <person name="Jimenez A."/>
            <person name="Keuchel H."/>
            <person name="Kirchrath L."/>
            <person name="Kleine K."/>
            <person name="Koetter P."/>
            <person name="Legrain P."/>
            <person name="Liebl S."/>
            <person name="Louis E.J."/>
            <person name="Maia e Silva A."/>
            <person name="Marck C."/>
            <person name="Monnier A.-L."/>
            <person name="Moestl D."/>
            <person name="Mueller S."/>
            <person name="Obermaier B."/>
            <person name="Oliver S.G."/>
            <person name="Pallier C."/>
            <person name="Pascolo S."/>
            <person name="Pfeiffer F."/>
            <person name="Philippsen P."/>
            <person name="Planta R.J."/>
            <person name="Pohl F.M."/>
            <person name="Pohl T.M."/>
            <person name="Poehlmann R."/>
            <person name="Portetelle D."/>
            <person name="Purnelle B."/>
            <person name="Puzos V."/>
            <person name="Ramezani Rad M."/>
            <person name="Rasmussen S.W."/>
            <person name="Remacha M.A."/>
            <person name="Revuelta J.L."/>
            <person name="Richard G.-F."/>
            <person name="Rieger M."/>
            <person name="Rodrigues-Pousada C."/>
            <person name="Rose M."/>
            <person name="Rupp T."/>
            <person name="Santos M.A."/>
            <person name="Schwager C."/>
            <person name="Sensen C."/>
            <person name="Skala J."/>
            <person name="Soares H."/>
            <person name="Sor F."/>
            <person name="Stegemann J."/>
            <person name="Tettelin H."/>
            <person name="Thierry A."/>
            <person name="Tzermia M."/>
            <person name="Urrestarazu L.A."/>
            <person name="van Dyck L."/>
            <person name="van Vliet-Reedijk J.C."/>
            <person name="Valens M."/>
            <person name="Vandenbol M."/>
            <person name="Vilela C."/>
            <person name="Vissers S."/>
            <person name="von Wettstein D."/>
            <person name="Voss H."/>
            <person name="Wiemann S."/>
            <person name="Xu G."/>
            <person name="Zimmermann J."/>
            <person name="Haasemann M."/>
            <person name="Becker I."/>
            <person name="Mewes H.-W."/>
        </authorList>
    </citation>
    <scope>NUCLEOTIDE SEQUENCE [LARGE SCALE GENOMIC DNA]</scope>
    <source>
        <strain>ATCC 204508 / S288c</strain>
    </source>
</reference>
<reference key="2">
    <citation type="journal article" date="2014" name="G3 (Bethesda)">
        <title>The reference genome sequence of Saccharomyces cerevisiae: Then and now.</title>
        <authorList>
            <person name="Engel S.R."/>
            <person name="Dietrich F.S."/>
            <person name="Fisk D.G."/>
            <person name="Binkley G."/>
            <person name="Balakrishnan R."/>
            <person name="Costanzo M.C."/>
            <person name="Dwight S.S."/>
            <person name="Hitz B.C."/>
            <person name="Karra K."/>
            <person name="Nash R.S."/>
            <person name="Weng S."/>
            <person name="Wong E.D."/>
            <person name="Lloyd P."/>
            <person name="Skrzypek M.S."/>
            <person name="Miyasato S.R."/>
            <person name="Simison M."/>
            <person name="Cherry J.M."/>
        </authorList>
    </citation>
    <scope>GENOME REANNOTATION</scope>
    <source>
        <strain>ATCC 204508 / S288c</strain>
    </source>
</reference>
<reference key="3">
    <citation type="journal article" date="1998" name="EMBO J.">
        <title>Recognition specificity of individual EH domains of mammals and yeast.</title>
        <authorList>
            <person name="Paoluzi S."/>
            <person name="Castagnoli L."/>
            <person name="Lauro I."/>
            <person name="Salcini A.E."/>
            <person name="Coda L."/>
            <person name="Fre' S."/>
            <person name="Confalonieri S."/>
            <person name="Pelicci P.G."/>
            <person name="Di Fiore P.P."/>
            <person name="Cesareni G."/>
        </authorList>
    </citation>
    <scope>DOMAIN</scope>
</reference>
<reference key="4">
    <citation type="journal article" date="1999" name="Mol. Cell. Biol.">
        <title>A genetic screen for ribosomal DNA silencing defects identifies multiple DNA replication and chromatin-modulating factors.</title>
        <authorList>
            <person name="Smith J.S."/>
            <person name="Caputo E."/>
            <person name="Boeke J.D."/>
        </authorList>
    </citation>
    <scope>FUNCTION</scope>
</reference>
<reference key="5">
    <citation type="journal article" date="2004" name="J. Biol. Chem.">
        <title>Negative regulation of phosphatidylinositol 4,5-bisphosphate levels by the INP51-associated proteins TAX4 and IRS4.</title>
        <authorList>
            <person name="Morales-Johansson H."/>
            <person name="Jenoe P."/>
            <person name="Cooke F.T."/>
            <person name="Hall M.N."/>
        </authorList>
    </citation>
    <scope>FUNCTION</scope>
    <scope>INTERACTION WITH INP51</scope>
</reference>
<reference key="6">
    <citation type="journal article" date="2008" name="Mol. Cell. Proteomics">
        <title>A multidimensional chromatography technology for in-depth phosphoproteome analysis.</title>
        <authorList>
            <person name="Albuquerque C.P."/>
            <person name="Smolka M.B."/>
            <person name="Payne S.H."/>
            <person name="Bafna V."/>
            <person name="Eng J."/>
            <person name="Zhou H."/>
        </authorList>
    </citation>
    <scope>IDENTIFICATION BY MASS SPECTROMETRY [LARGE SCALE ANALYSIS]</scope>
</reference>
<reference key="7">
    <citation type="journal article" date="2009" name="Science">
        <title>Global analysis of Cdk1 substrate phosphorylation sites provides insights into evolution.</title>
        <authorList>
            <person name="Holt L.J."/>
            <person name="Tuch B.B."/>
            <person name="Villen J."/>
            <person name="Johnson A.D."/>
            <person name="Gygi S.P."/>
            <person name="Morgan D.O."/>
        </authorList>
    </citation>
    <scope>PHOSPHORYLATION [LARGE SCALE ANALYSIS] AT SER-180</scope>
    <scope>IDENTIFICATION BY MASS SPECTROMETRY [LARGE SCALE ANALYSIS]</scope>
</reference>
<proteinExistence type="evidence at protein level"/>
<feature type="chain" id="PRO_0000203199" description="Increased rDNA silencing protein 4">
    <location>
        <begin position="1"/>
        <end position="615"/>
    </location>
</feature>
<feature type="domain" description="EH">
    <location>
        <begin position="460"/>
        <end position="571"/>
    </location>
</feature>
<feature type="region of interest" description="Disordered" evidence="1">
    <location>
        <begin position="38"/>
        <end position="135"/>
    </location>
</feature>
<feature type="region of interest" description="Disordered" evidence="1">
    <location>
        <begin position="152"/>
        <end position="260"/>
    </location>
</feature>
<feature type="region of interest" description="Disordered" evidence="1">
    <location>
        <begin position="277"/>
        <end position="304"/>
    </location>
</feature>
<feature type="region of interest" description="Disordered" evidence="1">
    <location>
        <begin position="323"/>
        <end position="445"/>
    </location>
</feature>
<feature type="compositionally biased region" description="Polar residues" evidence="1">
    <location>
        <begin position="50"/>
        <end position="65"/>
    </location>
</feature>
<feature type="compositionally biased region" description="Low complexity" evidence="1">
    <location>
        <begin position="121"/>
        <end position="135"/>
    </location>
</feature>
<feature type="compositionally biased region" description="Low complexity" evidence="1">
    <location>
        <begin position="157"/>
        <end position="168"/>
    </location>
</feature>
<feature type="compositionally biased region" description="Low complexity" evidence="1">
    <location>
        <begin position="184"/>
        <end position="198"/>
    </location>
</feature>
<feature type="compositionally biased region" description="Polar residues" evidence="1">
    <location>
        <begin position="248"/>
        <end position="260"/>
    </location>
</feature>
<feature type="compositionally biased region" description="Low complexity" evidence="1">
    <location>
        <begin position="281"/>
        <end position="290"/>
    </location>
</feature>
<feature type="compositionally biased region" description="Basic and acidic residues" evidence="1">
    <location>
        <begin position="365"/>
        <end position="377"/>
    </location>
</feature>
<feature type="compositionally biased region" description="Acidic residues" evidence="1">
    <location>
        <begin position="389"/>
        <end position="402"/>
    </location>
</feature>
<feature type="compositionally biased region" description="Basic residues" evidence="1">
    <location>
        <begin position="409"/>
        <end position="438"/>
    </location>
</feature>
<feature type="modified residue" description="Phosphoserine" evidence="5">
    <location>
        <position position="180"/>
    </location>
</feature>
<comment type="function">
    <text evidence="2 3">With TAX4, acts as a positive regulator of INP51 activity and phosphatidylinositol 4,5-bisphosphate turnover. Negatively regulates signaling through the cell integrity pathway, including the MAP kinase SLT2. Also seems to be involved in rDNA silencing.</text>
</comment>
<comment type="subunit">
    <text evidence="3">Interacts with INP51.</text>
</comment>
<comment type="interaction">
    <interactant intactId="EBI-27090">
        <id>P36115</id>
    </interactant>
    <interactant intactId="EBI-24915">
        <id>P40559</id>
        <label>INP51</label>
    </interactant>
    <organismsDiffer>false</organismsDiffer>
    <experiments>4</experiments>
</comment>
<comment type="similarity">
    <text evidence="4">Belongs to the IRS4 family.</text>
</comment>
<organism>
    <name type="scientific">Saccharomyces cerevisiae (strain ATCC 204508 / S288c)</name>
    <name type="common">Baker's yeast</name>
    <dbReference type="NCBI Taxonomy" id="559292"/>
    <lineage>
        <taxon>Eukaryota</taxon>
        <taxon>Fungi</taxon>
        <taxon>Dikarya</taxon>
        <taxon>Ascomycota</taxon>
        <taxon>Saccharomycotina</taxon>
        <taxon>Saccharomycetes</taxon>
        <taxon>Saccharomycetales</taxon>
        <taxon>Saccharomycetaceae</taxon>
        <taxon>Saccharomyces</taxon>
    </lineage>
</organism>
<accession>P36115</accession>
<accession>D6VX84</accession>
<keyword id="KW-0443">Lipid metabolism</keyword>
<keyword id="KW-0597">Phosphoprotein</keyword>
<keyword id="KW-1185">Reference proteome</keyword>